<comment type="function">
    <text evidence="1">One of the primary rRNA binding proteins, it binds directly to 16S rRNA where it nucleates assembly of the body of the 30S subunit.</text>
</comment>
<comment type="function">
    <text evidence="1">With S5 and S12 plays an important role in translational accuracy.</text>
</comment>
<comment type="subunit">
    <text evidence="1">Part of the 30S ribosomal subunit. Contacts protein S5. The interaction surface between S4 and S5 is involved in control of translational fidelity.</text>
</comment>
<comment type="similarity">
    <text evidence="1">Belongs to the universal ribosomal protein uS4 family.</text>
</comment>
<reference key="1">
    <citation type="submission" date="2008-04" db="EMBL/GenBank/DDBJ databases">
        <title>Complete sequence of chromosome of Natranaerobius thermophilus JW/NM-WN-LF.</title>
        <authorList>
            <consortium name="US DOE Joint Genome Institute"/>
            <person name="Copeland A."/>
            <person name="Lucas S."/>
            <person name="Lapidus A."/>
            <person name="Glavina del Rio T."/>
            <person name="Dalin E."/>
            <person name="Tice H."/>
            <person name="Bruce D."/>
            <person name="Goodwin L."/>
            <person name="Pitluck S."/>
            <person name="Chertkov O."/>
            <person name="Brettin T."/>
            <person name="Detter J.C."/>
            <person name="Han C."/>
            <person name="Kuske C.R."/>
            <person name="Schmutz J."/>
            <person name="Larimer F."/>
            <person name="Land M."/>
            <person name="Hauser L."/>
            <person name="Kyrpides N."/>
            <person name="Lykidis A."/>
            <person name="Mesbah N.M."/>
            <person name="Wiegel J."/>
        </authorList>
    </citation>
    <scope>NUCLEOTIDE SEQUENCE [LARGE SCALE GENOMIC DNA]</scope>
    <source>
        <strain>ATCC BAA-1301 / DSM 18059 / JW/NM-WN-LF</strain>
    </source>
</reference>
<dbReference type="EMBL" id="CP001034">
    <property type="protein sequence ID" value="ACB83821.1"/>
    <property type="molecule type" value="Genomic_DNA"/>
</dbReference>
<dbReference type="RefSeq" id="WP_012446710.1">
    <property type="nucleotide sequence ID" value="NC_010718.1"/>
</dbReference>
<dbReference type="SMR" id="B2A4P9"/>
<dbReference type="FunCoup" id="B2A4P9">
    <property type="interactions" value="477"/>
</dbReference>
<dbReference type="STRING" id="457570.Nther_0222"/>
<dbReference type="KEGG" id="nth:Nther_0222"/>
<dbReference type="eggNOG" id="COG0522">
    <property type="taxonomic scope" value="Bacteria"/>
</dbReference>
<dbReference type="HOGENOM" id="CLU_092403_0_2_9"/>
<dbReference type="InParanoid" id="B2A4P9"/>
<dbReference type="OrthoDB" id="9803672at2"/>
<dbReference type="Proteomes" id="UP000001683">
    <property type="component" value="Chromosome"/>
</dbReference>
<dbReference type="GO" id="GO:0015935">
    <property type="term" value="C:small ribosomal subunit"/>
    <property type="evidence" value="ECO:0007669"/>
    <property type="project" value="InterPro"/>
</dbReference>
<dbReference type="GO" id="GO:0019843">
    <property type="term" value="F:rRNA binding"/>
    <property type="evidence" value="ECO:0007669"/>
    <property type="project" value="UniProtKB-UniRule"/>
</dbReference>
<dbReference type="GO" id="GO:0003735">
    <property type="term" value="F:structural constituent of ribosome"/>
    <property type="evidence" value="ECO:0007669"/>
    <property type="project" value="InterPro"/>
</dbReference>
<dbReference type="GO" id="GO:0042274">
    <property type="term" value="P:ribosomal small subunit biogenesis"/>
    <property type="evidence" value="ECO:0007669"/>
    <property type="project" value="TreeGrafter"/>
</dbReference>
<dbReference type="GO" id="GO:0006412">
    <property type="term" value="P:translation"/>
    <property type="evidence" value="ECO:0007669"/>
    <property type="project" value="UniProtKB-UniRule"/>
</dbReference>
<dbReference type="CDD" id="cd00165">
    <property type="entry name" value="S4"/>
    <property type="match status" value="1"/>
</dbReference>
<dbReference type="FunFam" id="1.10.1050.10:FF:000001">
    <property type="entry name" value="30S ribosomal protein S4"/>
    <property type="match status" value="1"/>
</dbReference>
<dbReference type="FunFam" id="3.10.290.10:FF:000001">
    <property type="entry name" value="30S ribosomal protein S4"/>
    <property type="match status" value="1"/>
</dbReference>
<dbReference type="Gene3D" id="1.10.1050.10">
    <property type="entry name" value="Ribosomal Protein S4 Delta 41, Chain A, domain 1"/>
    <property type="match status" value="1"/>
</dbReference>
<dbReference type="Gene3D" id="3.10.290.10">
    <property type="entry name" value="RNA-binding S4 domain"/>
    <property type="match status" value="1"/>
</dbReference>
<dbReference type="HAMAP" id="MF_01306_B">
    <property type="entry name" value="Ribosomal_uS4_B"/>
    <property type="match status" value="1"/>
</dbReference>
<dbReference type="InterPro" id="IPR022801">
    <property type="entry name" value="Ribosomal_uS4"/>
</dbReference>
<dbReference type="InterPro" id="IPR005709">
    <property type="entry name" value="Ribosomal_uS4_bac-type"/>
</dbReference>
<dbReference type="InterPro" id="IPR018079">
    <property type="entry name" value="Ribosomal_uS4_CS"/>
</dbReference>
<dbReference type="InterPro" id="IPR001912">
    <property type="entry name" value="Ribosomal_uS4_N"/>
</dbReference>
<dbReference type="InterPro" id="IPR002942">
    <property type="entry name" value="S4_RNA-bd"/>
</dbReference>
<dbReference type="InterPro" id="IPR036986">
    <property type="entry name" value="S4_RNA-bd_sf"/>
</dbReference>
<dbReference type="NCBIfam" id="NF003717">
    <property type="entry name" value="PRK05327.1"/>
    <property type="match status" value="1"/>
</dbReference>
<dbReference type="NCBIfam" id="TIGR01017">
    <property type="entry name" value="rpsD_bact"/>
    <property type="match status" value="1"/>
</dbReference>
<dbReference type="PANTHER" id="PTHR11831">
    <property type="entry name" value="30S 40S RIBOSOMAL PROTEIN"/>
    <property type="match status" value="1"/>
</dbReference>
<dbReference type="PANTHER" id="PTHR11831:SF4">
    <property type="entry name" value="SMALL RIBOSOMAL SUBUNIT PROTEIN US4M"/>
    <property type="match status" value="1"/>
</dbReference>
<dbReference type="Pfam" id="PF00163">
    <property type="entry name" value="Ribosomal_S4"/>
    <property type="match status" value="1"/>
</dbReference>
<dbReference type="Pfam" id="PF01479">
    <property type="entry name" value="S4"/>
    <property type="match status" value="1"/>
</dbReference>
<dbReference type="SMART" id="SM01390">
    <property type="entry name" value="Ribosomal_S4"/>
    <property type="match status" value="1"/>
</dbReference>
<dbReference type="SMART" id="SM00363">
    <property type="entry name" value="S4"/>
    <property type="match status" value="1"/>
</dbReference>
<dbReference type="SUPFAM" id="SSF55174">
    <property type="entry name" value="Alpha-L RNA-binding motif"/>
    <property type="match status" value="1"/>
</dbReference>
<dbReference type="PROSITE" id="PS00632">
    <property type="entry name" value="RIBOSOMAL_S4"/>
    <property type="match status" value="1"/>
</dbReference>
<dbReference type="PROSITE" id="PS50889">
    <property type="entry name" value="S4"/>
    <property type="match status" value="1"/>
</dbReference>
<protein>
    <recommendedName>
        <fullName evidence="1">Small ribosomal subunit protein uS4</fullName>
    </recommendedName>
    <alternativeName>
        <fullName evidence="2">30S ribosomal protein S4</fullName>
    </alternativeName>
</protein>
<feature type="chain" id="PRO_1000140764" description="Small ribosomal subunit protein uS4">
    <location>
        <begin position="1"/>
        <end position="209"/>
    </location>
</feature>
<feature type="domain" description="S4 RNA-binding" evidence="1">
    <location>
        <begin position="99"/>
        <end position="164"/>
    </location>
</feature>
<name>RS4_NATTJ</name>
<gene>
    <name evidence="1" type="primary">rpsD</name>
    <name type="ordered locus">Nther_0222</name>
</gene>
<proteinExistence type="inferred from homology"/>
<organism>
    <name type="scientific">Natranaerobius thermophilus (strain ATCC BAA-1301 / DSM 18059 / JW/NM-WN-LF)</name>
    <dbReference type="NCBI Taxonomy" id="457570"/>
    <lineage>
        <taxon>Bacteria</taxon>
        <taxon>Bacillati</taxon>
        <taxon>Bacillota</taxon>
        <taxon>Clostridia</taxon>
        <taxon>Natranaerobiales</taxon>
        <taxon>Natranaerobiaceae</taxon>
        <taxon>Natranaerobius</taxon>
    </lineage>
</organism>
<keyword id="KW-1185">Reference proteome</keyword>
<keyword id="KW-0687">Ribonucleoprotein</keyword>
<keyword id="KW-0689">Ribosomal protein</keyword>
<keyword id="KW-0694">RNA-binding</keyword>
<keyword id="KW-0699">rRNA-binding</keyword>
<evidence type="ECO:0000255" key="1">
    <source>
        <dbReference type="HAMAP-Rule" id="MF_01306"/>
    </source>
</evidence>
<evidence type="ECO:0000305" key="2"/>
<sequence>MARYQGPVCRLCRREGTKLFLKGERCYTDKCAIDKKAYAPGQHGPTRRSKQSEYGMQLREKQKARRIYGVLENQFRRYFREADRKKGITGQTLLRLLETRLDNVVYRMGFAASRAEARQFVNHGHIMVNGKRVNVASYEVKPGDEVVVREKSRDIPRVQELKELAEGYRVPEWLEADHENFTGRVVRYPEREEIDVPVEEHLIVELYSR</sequence>
<accession>B2A4P9</accession>